<accession>Q98NP9</accession>
<keyword id="KW-0133">Cell shape</keyword>
<keyword id="KW-0961">Cell wall biogenesis/degradation</keyword>
<keyword id="KW-0413">Isomerase</keyword>
<keyword id="KW-0573">Peptidoglycan synthesis</keyword>
<proteinExistence type="inferred from homology"/>
<gene>
    <name evidence="1" type="primary">murI</name>
    <name type="ordered locus">mlr0039</name>
</gene>
<organism>
    <name type="scientific">Mesorhizobium japonicum (strain LMG 29417 / CECT 9101 / MAFF 303099)</name>
    <name type="common">Mesorhizobium loti (strain MAFF 303099)</name>
    <dbReference type="NCBI Taxonomy" id="266835"/>
    <lineage>
        <taxon>Bacteria</taxon>
        <taxon>Pseudomonadati</taxon>
        <taxon>Pseudomonadota</taxon>
        <taxon>Alphaproteobacteria</taxon>
        <taxon>Hyphomicrobiales</taxon>
        <taxon>Phyllobacteriaceae</taxon>
        <taxon>Mesorhizobium</taxon>
    </lineage>
</organism>
<name>MURI_RHILO</name>
<feature type="chain" id="PRO_0000095501" description="Glutamate racemase">
    <location>
        <begin position="1"/>
        <end position="262"/>
    </location>
</feature>
<feature type="active site" description="Proton donor/acceptor" evidence="1">
    <location>
        <position position="74"/>
    </location>
</feature>
<feature type="active site" description="Proton donor/acceptor" evidence="1">
    <location>
        <position position="189"/>
    </location>
</feature>
<feature type="binding site" evidence="1">
    <location>
        <begin position="10"/>
        <end position="11"/>
    </location>
    <ligand>
        <name>substrate</name>
    </ligand>
</feature>
<feature type="binding site" evidence="1">
    <location>
        <begin position="42"/>
        <end position="43"/>
    </location>
    <ligand>
        <name>substrate</name>
    </ligand>
</feature>
<feature type="binding site" evidence="1">
    <location>
        <begin position="75"/>
        <end position="76"/>
    </location>
    <ligand>
        <name>substrate</name>
    </ligand>
</feature>
<feature type="binding site" evidence="1">
    <location>
        <begin position="190"/>
        <end position="191"/>
    </location>
    <ligand>
        <name>substrate</name>
    </ligand>
</feature>
<dbReference type="EC" id="5.1.1.3" evidence="1"/>
<dbReference type="EMBL" id="BA000012">
    <property type="protein sequence ID" value="BAB47712.1"/>
    <property type="status" value="ALT_INIT"/>
    <property type="molecule type" value="Genomic_DNA"/>
</dbReference>
<dbReference type="RefSeq" id="WP_044547414.1">
    <property type="nucleotide sequence ID" value="NC_002678.2"/>
</dbReference>
<dbReference type="SMR" id="Q98NP9"/>
<dbReference type="KEGG" id="mlo:mlr0039"/>
<dbReference type="PATRIC" id="fig|266835.9.peg.32"/>
<dbReference type="eggNOG" id="COG0796">
    <property type="taxonomic scope" value="Bacteria"/>
</dbReference>
<dbReference type="HOGENOM" id="CLU_052344_2_0_5"/>
<dbReference type="UniPathway" id="UPA00219"/>
<dbReference type="Proteomes" id="UP000000552">
    <property type="component" value="Chromosome"/>
</dbReference>
<dbReference type="GO" id="GO:0008881">
    <property type="term" value="F:glutamate racemase activity"/>
    <property type="evidence" value="ECO:0007669"/>
    <property type="project" value="UniProtKB-UniRule"/>
</dbReference>
<dbReference type="GO" id="GO:0071555">
    <property type="term" value="P:cell wall organization"/>
    <property type="evidence" value="ECO:0007669"/>
    <property type="project" value="UniProtKB-KW"/>
</dbReference>
<dbReference type="GO" id="GO:0009252">
    <property type="term" value="P:peptidoglycan biosynthetic process"/>
    <property type="evidence" value="ECO:0007669"/>
    <property type="project" value="UniProtKB-UniRule"/>
</dbReference>
<dbReference type="GO" id="GO:0008360">
    <property type="term" value="P:regulation of cell shape"/>
    <property type="evidence" value="ECO:0007669"/>
    <property type="project" value="UniProtKB-KW"/>
</dbReference>
<dbReference type="Gene3D" id="3.40.50.1860">
    <property type="match status" value="2"/>
</dbReference>
<dbReference type="HAMAP" id="MF_00258">
    <property type="entry name" value="Glu_racemase"/>
    <property type="match status" value="1"/>
</dbReference>
<dbReference type="InterPro" id="IPR015942">
    <property type="entry name" value="Asp/Glu/hydantoin_racemase"/>
</dbReference>
<dbReference type="InterPro" id="IPR001920">
    <property type="entry name" value="Asp/Glu_race"/>
</dbReference>
<dbReference type="InterPro" id="IPR018187">
    <property type="entry name" value="Asp/Glu_racemase_AS_1"/>
</dbReference>
<dbReference type="InterPro" id="IPR033134">
    <property type="entry name" value="Asp/Glu_racemase_AS_2"/>
</dbReference>
<dbReference type="InterPro" id="IPR004391">
    <property type="entry name" value="Glu_race"/>
</dbReference>
<dbReference type="NCBIfam" id="TIGR00067">
    <property type="entry name" value="glut_race"/>
    <property type="match status" value="1"/>
</dbReference>
<dbReference type="PANTHER" id="PTHR21198">
    <property type="entry name" value="GLUTAMATE RACEMASE"/>
    <property type="match status" value="1"/>
</dbReference>
<dbReference type="PANTHER" id="PTHR21198:SF2">
    <property type="entry name" value="GLUTAMATE RACEMASE"/>
    <property type="match status" value="1"/>
</dbReference>
<dbReference type="Pfam" id="PF01177">
    <property type="entry name" value="Asp_Glu_race"/>
    <property type="match status" value="1"/>
</dbReference>
<dbReference type="SUPFAM" id="SSF53681">
    <property type="entry name" value="Aspartate/glutamate racemase"/>
    <property type="match status" value="2"/>
</dbReference>
<dbReference type="PROSITE" id="PS00923">
    <property type="entry name" value="ASP_GLU_RACEMASE_1"/>
    <property type="match status" value="1"/>
</dbReference>
<dbReference type="PROSITE" id="PS00924">
    <property type="entry name" value="ASP_GLU_RACEMASE_2"/>
    <property type="match status" value="1"/>
</dbReference>
<sequence>MTDQPILMFDSGVGGLTVLREARVLMPDRRFVYVADDAAFPFGAWEEPALRTHILDLFVKLLDRFAPAISVIACNTASTLVIDALRERFPGHPFVGTVPAVKPAAERTRSGLVSVLATPGTVKRQYTRDLISKWAQKCHVRLVGSDRLAGLAEVYMREGFVDEEAVRAEIAPCFMEHEGLRTDIVVLACTHYPFLVNRMRKTAPWPVDWIDPAEAIARRALSLLPPVDGALPQGEPDIAVFTSGKTDFAIGRLMQGFGLSVR</sequence>
<protein>
    <recommendedName>
        <fullName evidence="1">Glutamate racemase</fullName>
        <ecNumber evidence="1">5.1.1.3</ecNumber>
    </recommendedName>
</protein>
<evidence type="ECO:0000255" key="1">
    <source>
        <dbReference type="HAMAP-Rule" id="MF_00258"/>
    </source>
</evidence>
<evidence type="ECO:0000305" key="2"/>
<reference key="1">
    <citation type="journal article" date="2000" name="DNA Res.">
        <title>Complete genome structure of the nitrogen-fixing symbiotic bacterium Mesorhizobium loti.</title>
        <authorList>
            <person name="Kaneko T."/>
            <person name="Nakamura Y."/>
            <person name="Sato S."/>
            <person name="Asamizu E."/>
            <person name="Kato T."/>
            <person name="Sasamoto S."/>
            <person name="Watanabe A."/>
            <person name="Idesawa K."/>
            <person name="Ishikawa A."/>
            <person name="Kawashima K."/>
            <person name="Kimura T."/>
            <person name="Kishida Y."/>
            <person name="Kiyokawa C."/>
            <person name="Kohara M."/>
            <person name="Matsumoto M."/>
            <person name="Matsuno A."/>
            <person name="Mochizuki Y."/>
            <person name="Nakayama S."/>
            <person name="Nakazaki N."/>
            <person name="Shimpo S."/>
            <person name="Sugimoto M."/>
            <person name="Takeuchi C."/>
            <person name="Yamada M."/>
            <person name="Tabata S."/>
        </authorList>
    </citation>
    <scope>NUCLEOTIDE SEQUENCE [LARGE SCALE GENOMIC DNA]</scope>
    <source>
        <strain>LMG 29417 / CECT 9101 / MAFF 303099</strain>
    </source>
</reference>
<comment type="function">
    <text evidence="1">Provides the (R)-glutamate required for cell wall biosynthesis.</text>
</comment>
<comment type="catalytic activity">
    <reaction evidence="1">
        <text>L-glutamate = D-glutamate</text>
        <dbReference type="Rhea" id="RHEA:12813"/>
        <dbReference type="ChEBI" id="CHEBI:29985"/>
        <dbReference type="ChEBI" id="CHEBI:29986"/>
        <dbReference type="EC" id="5.1.1.3"/>
    </reaction>
</comment>
<comment type="pathway">
    <text evidence="1">Cell wall biogenesis; peptidoglycan biosynthesis.</text>
</comment>
<comment type="similarity">
    <text evidence="1">Belongs to the aspartate/glutamate racemases family.</text>
</comment>
<comment type="sequence caution" evidence="2">
    <conflict type="erroneous initiation">
        <sequence resource="EMBL-CDS" id="BAB47712"/>
    </conflict>
</comment>